<evidence type="ECO:0000250" key="1"/>
<evidence type="ECO:0000255" key="2"/>
<evidence type="ECO:0000305" key="3"/>
<evidence type="ECO:0007829" key="4">
    <source>
        <dbReference type="PDB" id="1TH5"/>
    </source>
</evidence>
<evidence type="ECO:0007829" key="5">
    <source>
        <dbReference type="PDB" id="2JNV"/>
    </source>
</evidence>
<proteinExistence type="evidence at protein level"/>
<dbReference type="EMBL" id="AB096013">
    <property type="protein sequence ID" value="BAC76603.1"/>
    <property type="molecule type" value="mRNA"/>
</dbReference>
<dbReference type="EMBL" id="DP000011">
    <property type="protein sequence ID" value="ABA96603.1"/>
    <property type="molecule type" value="Genomic_DNA"/>
</dbReference>
<dbReference type="EMBL" id="AP008218">
    <property type="protein sequence ID" value="BAF29313.1"/>
    <property type="molecule type" value="Genomic_DNA"/>
</dbReference>
<dbReference type="EMBL" id="AP014968">
    <property type="protein sequence ID" value="BAT16109.1"/>
    <property type="molecule type" value="Genomic_DNA"/>
</dbReference>
<dbReference type="RefSeq" id="XP_015619438.1">
    <property type="nucleotide sequence ID" value="XM_015763952.1"/>
</dbReference>
<dbReference type="PDB" id="1TH5">
    <property type="method" value="NMR"/>
    <property type="chains" value="A=154-226"/>
</dbReference>
<dbReference type="PDB" id="2JNV">
    <property type="method" value="NMR"/>
    <property type="chains" value="A=73-153"/>
</dbReference>
<dbReference type="PDBsum" id="1TH5"/>
<dbReference type="PDBsum" id="2JNV"/>
<dbReference type="SMR" id="Q84LK7"/>
<dbReference type="STRING" id="39947.Q84LK7"/>
<dbReference type="PaxDb" id="39947-Q84LK7"/>
<dbReference type="EnsemblPlants" id="Os12t0176200-01">
    <property type="protein sequence ID" value="Os12t0176200-01"/>
    <property type="gene ID" value="Os12g0176200"/>
</dbReference>
<dbReference type="Gramene" id="Os12t0176200-01">
    <property type="protein sequence ID" value="Os12t0176200-01"/>
    <property type="gene ID" value="Os12g0176200"/>
</dbReference>
<dbReference type="KEGG" id="dosa:Os12g0176200"/>
<dbReference type="eggNOG" id="KOG2358">
    <property type="taxonomic scope" value="Eukaryota"/>
</dbReference>
<dbReference type="HOGENOM" id="CLU_080894_2_0_1"/>
<dbReference type="InParanoid" id="Q84LK7"/>
<dbReference type="OMA" id="AYAWSSC"/>
<dbReference type="OrthoDB" id="565552at2759"/>
<dbReference type="EvolutionaryTrace" id="Q84LK7"/>
<dbReference type="Proteomes" id="UP000000763">
    <property type="component" value="Chromosome 12"/>
</dbReference>
<dbReference type="Proteomes" id="UP000059680">
    <property type="component" value="Chromosome 12"/>
</dbReference>
<dbReference type="GO" id="GO:0009570">
    <property type="term" value="C:chloroplast stroma"/>
    <property type="evidence" value="ECO:0007669"/>
    <property type="project" value="UniProtKB-SubCell"/>
</dbReference>
<dbReference type="GO" id="GO:0005739">
    <property type="term" value="C:mitochondrion"/>
    <property type="evidence" value="ECO:0000318"/>
    <property type="project" value="GO_Central"/>
</dbReference>
<dbReference type="GO" id="GO:0051539">
    <property type="term" value="F:4 iron, 4 sulfur cluster binding"/>
    <property type="evidence" value="ECO:0000318"/>
    <property type="project" value="GO_Central"/>
</dbReference>
<dbReference type="GO" id="GO:0005506">
    <property type="term" value="F:iron ion binding"/>
    <property type="evidence" value="ECO:0007669"/>
    <property type="project" value="InterPro"/>
</dbReference>
<dbReference type="GO" id="GO:0005198">
    <property type="term" value="F:structural molecule activity"/>
    <property type="evidence" value="ECO:0007669"/>
    <property type="project" value="UniProtKB-ARBA"/>
</dbReference>
<dbReference type="GO" id="GO:0016226">
    <property type="term" value="P:iron-sulfur cluster assembly"/>
    <property type="evidence" value="ECO:0007669"/>
    <property type="project" value="InterPro"/>
</dbReference>
<dbReference type="FunFam" id="3.30.300.130:FF:000003">
    <property type="entry name" value="NifU-like protein 3, chloroplastic"/>
    <property type="match status" value="1"/>
</dbReference>
<dbReference type="Gene3D" id="3.30.300.130">
    <property type="entry name" value="Fe-S cluster assembly (FSCA)"/>
    <property type="match status" value="2"/>
</dbReference>
<dbReference type="InterPro" id="IPR034904">
    <property type="entry name" value="FSCA_dom_sf"/>
</dbReference>
<dbReference type="InterPro" id="IPR001075">
    <property type="entry name" value="NIF_FeS_clus_asmbl_NifU_C"/>
</dbReference>
<dbReference type="PANTHER" id="PTHR11178">
    <property type="entry name" value="IRON-SULFUR CLUSTER SCAFFOLD PROTEIN NFU-RELATED"/>
    <property type="match status" value="1"/>
</dbReference>
<dbReference type="PANTHER" id="PTHR11178:SF39">
    <property type="entry name" value="NIFU-LIKE PROTEIN 2, CHLOROPLASTIC"/>
    <property type="match status" value="1"/>
</dbReference>
<dbReference type="Pfam" id="PF01106">
    <property type="entry name" value="NifU"/>
    <property type="match status" value="2"/>
</dbReference>
<dbReference type="SUPFAM" id="SSF117916">
    <property type="entry name" value="Fe-S cluster assembly (FSCA) domain-like"/>
    <property type="match status" value="2"/>
</dbReference>
<gene>
    <name type="primary">NIFU1</name>
    <name type="ordered locus">Os12g0176200</name>
    <name type="ordered locus">LOC_Os12g07700</name>
</gene>
<comment type="function">
    <text evidence="1">Molecular scaffold for [Fe-S] cluster assembly of chloroplastic iron-sulfur proteins.</text>
</comment>
<comment type="subunit">
    <text evidence="1">Homodimer; disulfide-linked.</text>
</comment>
<comment type="subcellular location">
    <subcellularLocation>
        <location evidence="1">Plastid</location>
        <location evidence="1">Chloroplast stroma</location>
    </subcellularLocation>
</comment>
<comment type="similarity">
    <text evidence="3">Belongs to the NifU family.</text>
</comment>
<organism>
    <name type="scientific">Oryza sativa subsp. japonica</name>
    <name type="common">Rice</name>
    <dbReference type="NCBI Taxonomy" id="39947"/>
    <lineage>
        <taxon>Eukaryota</taxon>
        <taxon>Viridiplantae</taxon>
        <taxon>Streptophyta</taxon>
        <taxon>Embryophyta</taxon>
        <taxon>Tracheophyta</taxon>
        <taxon>Spermatophyta</taxon>
        <taxon>Magnoliopsida</taxon>
        <taxon>Liliopsida</taxon>
        <taxon>Poales</taxon>
        <taxon>Poaceae</taxon>
        <taxon>BOP clade</taxon>
        <taxon>Oryzoideae</taxon>
        <taxon>Oryzeae</taxon>
        <taxon>Oryzinae</taxon>
        <taxon>Oryza</taxon>
        <taxon>Oryza sativa</taxon>
    </lineage>
</organism>
<sequence>MQTTTVPMAAAAAVAPSTTTSSSASFKVAAYAWSSCRSSSSPATRLVAAPNHQRPPLVVGAIAGLDPVTAVQLPLTAGNVESVLDQVRPYLTADGGDVALHEIAGNVVRLKLQGACGSCPSSLITIKRGIERRLMEKIPDVAAVEPVTDKETGLELNEENVEKVLNEIRPYLAGTGGGGLQFLMIKGPIVKVRLTGPAAVVRTVRIAVSKKLREKIPSIQIVQLLS</sequence>
<keyword id="KW-0002">3D-structure</keyword>
<keyword id="KW-0150">Chloroplast</keyword>
<keyword id="KW-1015">Disulfide bond</keyword>
<keyword id="KW-0934">Plastid</keyword>
<keyword id="KW-1185">Reference proteome</keyword>
<keyword id="KW-0809">Transit peptide</keyword>
<protein>
    <recommendedName>
        <fullName>NifU-like protein 1, chloroplastic</fullName>
    </recommendedName>
    <alternativeName>
        <fullName>OsNifu1</fullName>
    </alternativeName>
</protein>
<feature type="transit peptide" description="Chloroplast" evidence="2">
    <location>
        <begin position="1"/>
        <end position="76"/>
    </location>
</feature>
<feature type="chain" id="PRO_0000247614" description="NifU-like protein 1, chloroplastic">
    <location>
        <begin position="77"/>
        <end position="226"/>
    </location>
</feature>
<feature type="disulfide bond" description="Interchain (with C-119)" evidence="1">
    <location>
        <position position="116"/>
    </location>
</feature>
<feature type="disulfide bond" description="Interchain (with C-116)" evidence="1">
    <location>
        <position position="119"/>
    </location>
</feature>
<feature type="strand" evidence="5">
    <location>
        <begin position="73"/>
        <end position="75"/>
    </location>
</feature>
<feature type="helix" evidence="5">
    <location>
        <begin position="79"/>
        <end position="84"/>
    </location>
</feature>
<feature type="turn" evidence="5">
    <location>
        <begin position="85"/>
        <end position="87"/>
    </location>
</feature>
<feature type="helix" evidence="5">
    <location>
        <begin position="88"/>
        <end position="91"/>
    </location>
</feature>
<feature type="turn" evidence="5">
    <location>
        <begin position="92"/>
        <end position="95"/>
    </location>
</feature>
<feature type="strand" evidence="5">
    <location>
        <begin position="98"/>
        <end position="103"/>
    </location>
</feature>
<feature type="strand" evidence="5">
    <location>
        <begin position="105"/>
        <end position="112"/>
    </location>
</feature>
<feature type="strand" evidence="5">
    <location>
        <begin position="116"/>
        <end position="119"/>
    </location>
</feature>
<feature type="helix" evidence="5">
    <location>
        <begin position="122"/>
        <end position="135"/>
    </location>
</feature>
<feature type="strand" evidence="5">
    <location>
        <begin position="143"/>
        <end position="145"/>
    </location>
</feature>
<feature type="strand" evidence="5">
    <location>
        <begin position="147"/>
        <end position="149"/>
    </location>
</feature>
<feature type="helix" evidence="4">
    <location>
        <begin position="158"/>
        <end position="165"/>
    </location>
</feature>
<feature type="turn" evidence="4">
    <location>
        <begin position="166"/>
        <end position="168"/>
    </location>
</feature>
<feature type="helix" evidence="4">
    <location>
        <begin position="169"/>
        <end position="172"/>
    </location>
</feature>
<feature type="turn" evidence="4">
    <location>
        <begin position="173"/>
        <end position="176"/>
    </location>
</feature>
<feature type="strand" evidence="4">
    <location>
        <begin position="184"/>
        <end position="186"/>
    </location>
</feature>
<feature type="strand" evidence="4">
    <location>
        <begin position="189"/>
        <end position="192"/>
    </location>
</feature>
<feature type="strand" evidence="4">
    <location>
        <begin position="196"/>
        <end position="203"/>
    </location>
</feature>
<feature type="helix" evidence="4">
    <location>
        <begin position="204"/>
        <end position="215"/>
    </location>
</feature>
<feature type="strand" evidence="4">
    <location>
        <begin position="220"/>
        <end position="224"/>
    </location>
</feature>
<accession>Q84LK7</accession>
<accession>Q0IPQ2</accession>
<reference key="1">
    <citation type="submission" date="2002-11" db="EMBL/GenBank/DDBJ databases">
        <title>Nuclear-encoded plastid gene, NifU1, in rice.</title>
        <authorList>
            <person name="Asayama M."/>
        </authorList>
    </citation>
    <scope>NUCLEOTIDE SEQUENCE [MRNA]</scope>
    <source>
        <strain>cv. Nipponbare</strain>
        <tissue>Shoot</tissue>
    </source>
</reference>
<reference key="2">
    <citation type="journal article" date="2005" name="BMC Biol.">
        <title>The sequence of rice chromosomes 11 and 12, rich in disease resistance genes and recent gene duplications.</title>
        <authorList>
            <consortium name="The rice chromosomes 11 and 12 sequencing consortia"/>
        </authorList>
    </citation>
    <scope>NUCLEOTIDE SEQUENCE [LARGE SCALE GENOMIC DNA]</scope>
    <source>
        <strain>cv. Nipponbare</strain>
    </source>
</reference>
<reference key="3">
    <citation type="journal article" date="2005" name="Nature">
        <title>The map-based sequence of the rice genome.</title>
        <authorList>
            <consortium name="International rice genome sequencing project (IRGSP)"/>
        </authorList>
    </citation>
    <scope>NUCLEOTIDE SEQUENCE [LARGE SCALE GENOMIC DNA]</scope>
    <source>
        <strain>cv. Nipponbare</strain>
    </source>
</reference>
<reference key="4">
    <citation type="journal article" date="2008" name="Nucleic Acids Res.">
        <title>The rice annotation project database (RAP-DB): 2008 update.</title>
        <authorList>
            <consortium name="The rice annotation project (RAP)"/>
        </authorList>
    </citation>
    <scope>GENOME REANNOTATION</scope>
    <source>
        <strain>cv. Nipponbare</strain>
    </source>
</reference>
<reference key="5">
    <citation type="journal article" date="2013" name="Rice">
        <title>Improvement of the Oryza sativa Nipponbare reference genome using next generation sequence and optical map data.</title>
        <authorList>
            <person name="Kawahara Y."/>
            <person name="de la Bastide M."/>
            <person name="Hamilton J.P."/>
            <person name="Kanamori H."/>
            <person name="McCombie W.R."/>
            <person name="Ouyang S."/>
            <person name="Schwartz D.C."/>
            <person name="Tanaka T."/>
            <person name="Wu J."/>
            <person name="Zhou S."/>
            <person name="Childs K.L."/>
            <person name="Davidson R.M."/>
            <person name="Lin H."/>
            <person name="Quesada-Ocampo L."/>
            <person name="Vaillancourt B."/>
            <person name="Sakai H."/>
            <person name="Lee S.S."/>
            <person name="Kim J."/>
            <person name="Numa H."/>
            <person name="Itoh T."/>
            <person name="Buell C.R."/>
            <person name="Matsumoto T."/>
        </authorList>
    </citation>
    <scope>GENOME REANNOTATION</scope>
    <source>
        <strain>cv. Nipponbare</strain>
    </source>
</reference>
<reference key="6">
    <citation type="journal article" date="2005" name="Protein Expr. Purif.">
        <title>Refolding and purification of recombinant OsNifU1A domain II that was expressed by Escherichia coli.</title>
        <authorList>
            <person name="Katoh S."/>
            <person name="Murata K."/>
            <person name="Kubota Y."/>
            <person name="Kumeta H."/>
            <person name="Ogura K."/>
            <person name="Inagaki F."/>
            <person name="Asayama M."/>
            <person name="Katoh E."/>
        </authorList>
    </citation>
    <scope>PURIFICATION OF RECOMBINANT PROTEIN</scope>
</reference>
<reference key="7">
    <citation type="submission" date="2005-07" db="PDB data bank">
        <title>Solution structure of C-terminal domain of nifU-like protein from Oryza sativa.</title>
        <authorList>
            <person name="Kumeta H."/>
            <person name="Ogura K."/>
            <person name="Asayama M."/>
            <person name="Katoh S."/>
            <person name="Katoh E."/>
            <person name="Inagaki F."/>
        </authorList>
    </citation>
    <scope>STRUCTURE BY NMR OF 154-226</scope>
</reference>
<name>NIFU1_ORYSJ</name>